<evidence type="ECO:0000255" key="1">
    <source>
        <dbReference type="HAMAP-Rule" id="MF_00303"/>
    </source>
</evidence>
<evidence type="ECO:0000256" key="2">
    <source>
        <dbReference type="SAM" id="MobiDB-lite"/>
    </source>
</evidence>
<reference key="1">
    <citation type="journal article" date="2003" name="Nature">
        <title>Genome divergence in two Prochlorococcus ecotypes reflects oceanic niche differentiation.</title>
        <authorList>
            <person name="Rocap G."/>
            <person name="Larimer F.W."/>
            <person name="Lamerdin J.E."/>
            <person name="Malfatti S."/>
            <person name="Chain P."/>
            <person name="Ahlgren N.A."/>
            <person name="Arellano A."/>
            <person name="Coleman M."/>
            <person name="Hauser L."/>
            <person name="Hess W.R."/>
            <person name="Johnson Z.I."/>
            <person name="Land M.L."/>
            <person name="Lindell D."/>
            <person name="Post A.F."/>
            <person name="Regala W."/>
            <person name="Shah M."/>
            <person name="Shaw S.L."/>
            <person name="Steglich C."/>
            <person name="Sullivan M.B."/>
            <person name="Ting C.S."/>
            <person name="Tolonen A."/>
            <person name="Webb E.A."/>
            <person name="Zinser E.R."/>
            <person name="Chisholm S.W."/>
        </authorList>
    </citation>
    <scope>NUCLEOTIDE SEQUENCE [LARGE SCALE GENOMIC DNA]</scope>
    <source>
        <strain>MIT 9313</strain>
    </source>
</reference>
<proteinExistence type="inferred from homology"/>
<comment type="function">
    <text evidence="1">Involved in protein export. Acts as a chaperone by maintaining the newly synthesized protein in an open conformation. Functions as a peptidyl-prolyl cis-trans isomerase.</text>
</comment>
<comment type="catalytic activity">
    <reaction evidence="1">
        <text>[protein]-peptidylproline (omega=180) = [protein]-peptidylproline (omega=0)</text>
        <dbReference type="Rhea" id="RHEA:16237"/>
        <dbReference type="Rhea" id="RHEA-COMP:10747"/>
        <dbReference type="Rhea" id="RHEA-COMP:10748"/>
        <dbReference type="ChEBI" id="CHEBI:83833"/>
        <dbReference type="ChEBI" id="CHEBI:83834"/>
        <dbReference type="EC" id="5.2.1.8"/>
    </reaction>
</comment>
<comment type="subcellular location">
    <subcellularLocation>
        <location>Cytoplasm</location>
    </subcellularLocation>
    <text evidence="1">About half TF is bound to the ribosome near the polypeptide exit tunnel while the other half is free in the cytoplasm.</text>
</comment>
<comment type="domain">
    <text evidence="1">Consists of 3 domains; the N-terminus binds the ribosome, the middle domain has PPIase activity, while the C-terminus has intrinsic chaperone activity on its own.</text>
</comment>
<comment type="similarity">
    <text evidence="1">Belongs to the FKBP-type PPIase family. Tig subfamily.</text>
</comment>
<sequence>MSATALQVKTTQKPNSRLAVEVAVPAERCQANYEAAVTRLSRTTNLPGFRKGKVPRAVLLQQIGPVRIRATALESLVDAVWREVLEQESIEPLCEPELSGGFDALLESFQPSEALTLTLETDVTPTPKLKATKGLQAEAEVVTFDPSKVDELIEQSRKQLATLVPVESRPAAIGDIAVVSFSGTYDDDGSAIEGGSSDSMDVDLEDGQMIPGFVEGIIGMNLGDEKTVDCHFPDDYSKEDARGRKASFVINLKELKTRELPDLDDAFAQQSSDKATLEELRNDLEQRLQEDAKRRDRSNRHDALLEALTEQLEVDLPNTLVQQEIRNLVEQTASQFAQQGMDVKSMFTPELVRSLMESSRPEAEERLRRSFALTALAESEDLKIEESEISAKVKEVSRELSGERDIDPARLRQAVSDDLLKDKLLDWLEDNSTITEKVLESEAKTSKPAAKSKGSKTKSTKTKTNKANTEKPASDKSKS</sequence>
<organism>
    <name type="scientific">Prochlorococcus marinus (strain MIT 9313)</name>
    <dbReference type="NCBI Taxonomy" id="74547"/>
    <lineage>
        <taxon>Bacteria</taxon>
        <taxon>Bacillati</taxon>
        <taxon>Cyanobacteriota</taxon>
        <taxon>Cyanophyceae</taxon>
        <taxon>Synechococcales</taxon>
        <taxon>Prochlorococcaceae</taxon>
        <taxon>Prochlorococcus</taxon>
    </lineage>
</organism>
<name>TIG_PROMM</name>
<feature type="chain" id="PRO_0000179405" description="Trigger factor">
    <location>
        <begin position="1"/>
        <end position="479"/>
    </location>
</feature>
<feature type="domain" description="PPIase FKBP-type" evidence="1">
    <location>
        <begin position="174"/>
        <end position="261"/>
    </location>
</feature>
<feature type="region of interest" description="Disordered" evidence="2">
    <location>
        <begin position="438"/>
        <end position="479"/>
    </location>
</feature>
<feature type="compositionally biased region" description="Basic residues" evidence="2">
    <location>
        <begin position="453"/>
        <end position="464"/>
    </location>
</feature>
<feature type="compositionally biased region" description="Basic and acidic residues" evidence="2">
    <location>
        <begin position="468"/>
        <end position="479"/>
    </location>
</feature>
<keyword id="KW-0131">Cell cycle</keyword>
<keyword id="KW-0132">Cell division</keyword>
<keyword id="KW-0143">Chaperone</keyword>
<keyword id="KW-0963">Cytoplasm</keyword>
<keyword id="KW-0413">Isomerase</keyword>
<keyword id="KW-1185">Reference proteome</keyword>
<keyword id="KW-0697">Rotamase</keyword>
<gene>
    <name evidence="1" type="primary">tig</name>
    <name type="ordered locus">PMT_0063</name>
</gene>
<accession>Q7V991</accession>
<protein>
    <recommendedName>
        <fullName evidence="1">Trigger factor</fullName>
        <shortName evidence="1">TF</shortName>
        <ecNumber evidence="1">5.2.1.8</ecNumber>
    </recommendedName>
    <alternativeName>
        <fullName evidence="1">PPIase</fullName>
    </alternativeName>
</protein>
<dbReference type="EC" id="5.2.1.8" evidence="1"/>
<dbReference type="EMBL" id="BX548175">
    <property type="protein sequence ID" value="CAE20238.1"/>
    <property type="molecule type" value="Genomic_DNA"/>
</dbReference>
<dbReference type="RefSeq" id="WP_011129442.1">
    <property type="nucleotide sequence ID" value="NC_005071.1"/>
</dbReference>
<dbReference type="SMR" id="Q7V991"/>
<dbReference type="KEGG" id="pmt:PMT_0063"/>
<dbReference type="eggNOG" id="COG0544">
    <property type="taxonomic scope" value="Bacteria"/>
</dbReference>
<dbReference type="HOGENOM" id="CLU_033058_3_1_3"/>
<dbReference type="OrthoDB" id="9767721at2"/>
<dbReference type="Proteomes" id="UP000001423">
    <property type="component" value="Chromosome"/>
</dbReference>
<dbReference type="GO" id="GO:0005737">
    <property type="term" value="C:cytoplasm"/>
    <property type="evidence" value="ECO:0007669"/>
    <property type="project" value="UniProtKB-SubCell"/>
</dbReference>
<dbReference type="GO" id="GO:0003755">
    <property type="term" value="F:peptidyl-prolyl cis-trans isomerase activity"/>
    <property type="evidence" value="ECO:0007669"/>
    <property type="project" value="UniProtKB-UniRule"/>
</dbReference>
<dbReference type="GO" id="GO:0044183">
    <property type="term" value="F:protein folding chaperone"/>
    <property type="evidence" value="ECO:0007669"/>
    <property type="project" value="TreeGrafter"/>
</dbReference>
<dbReference type="GO" id="GO:0043022">
    <property type="term" value="F:ribosome binding"/>
    <property type="evidence" value="ECO:0007669"/>
    <property type="project" value="TreeGrafter"/>
</dbReference>
<dbReference type="GO" id="GO:0051083">
    <property type="term" value="P:'de novo' cotranslational protein folding"/>
    <property type="evidence" value="ECO:0007669"/>
    <property type="project" value="TreeGrafter"/>
</dbReference>
<dbReference type="GO" id="GO:0051301">
    <property type="term" value="P:cell division"/>
    <property type="evidence" value="ECO:0007669"/>
    <property type="project" value="UniProtKB-KW"/>
</dbReference>
<dbReference type="GO" id="GO:0061077">
    <property type="term" value="P:chaperone-mediated protein folding"/>
    <property type="evidence" value="ECO:0007669"/>
    <property type="project" value="TreeGrafter"/>
</dbReference>
<dbReference type="GO" id="GO:0015031">
    <property type="term" value="P:protein transport"/>
    <property type="evidence" value="ECO:0007669"/>
    <property type="project" value="UniProtKB-UniRule"/>
</dbReference>
<dbReference type="GO" id="GO:0043335">
    <property type="term" value="P:protein unfolding"/>
    <property type="evidence" value="ECO:0007669"/>
    <property type="project" value="TreeGrafter"/>
</dbReference>
<dbReference type="FunFam" id="3.10.50.40:FF:000001">
    <property type="entry name" value="Trigger factor"/>
    <property type="match status" value="1"/>
</dbReference>
<dbReference type="FunFam" id="3.30.70.1050:FF:000004">
    <property type="entry name" value="Trigger factor"/>
    <property type="match status" value="1"/>
</dbReference>
<dbReference type="Gene3D" id="3.10.50.40">
    <property type="match status" value="1"/>
</dbReference>
<dbReference type="Gene3D" id="3.30.70.1050">
    <property type="entry name" value="Trigger factor ribosome-binding domain"/>
    <property type="match status" value="1"/>
</dbReference>
<dbReference type="Gene3D" id="1.10.3120.10">
    <property type="entry name" value="Trigger factor, C-terminal domain"/>
    <property type="match status" value="1"/>
</dbReference>
<dbReference type="HAMAP" id="MF_00303">
    <property type="entry name" value="Trigger_factor_Tig"/>
    <property type="match status" value="1"/>
</dbReference>
<dbReference type="InterPro" id="IPR046357">
    <property type="entry name" value="PPIase_dom_sf"/>
</dbReference>
<dbReference type="InterPro" id="IPR001179">
    <property type="entry name" value="PPIase_FKBP_dom"/>
</dbReference>
<dbReference type="InterPro" id="IPR005215">
    <property type="entry name" value="Trig_fac"/>
</dbReference>
<dbReference type="InterPro" id="IPR008880">
    <property type="entry name" value="Trigger_fac_C"/>
</dbReference>
<dbReference type="InterPro" id="IPR037041">
    <property type="entry name" value="Trigger_fac_C_sf"/>
</dbReference>
<dbReference type="InterPro" id="IPR008881">
    <property type="entry name" value="Trigger_fac_ribosome-bd_bac"/>
</dbReference>
<dbReference type="InterPro" id="IPR036611">
    <property type="entry name" value="Trigger_fac_ribosome-bd_sf"/>
</dbReference>
<dbReference type="InterPro" id="IPR027304">
    <property type="entry name" value="Trigger_fact/SurA_dom_sf"/>
</dbReference>
<dbReference type="NCBIfam" id="TIGR00115">
    <property type="entry name" value="tig"/>
    <property type="match status" value="1"/>
</dbReference>
<dbReference type="PANTHER" id="PTHR30560">
    <property type="entry name" value="TRIGGER FACTOR CHAPERONE AND PEPTIDYL-PROLYL CIS/TRANS ISOMERASE"/>
    <property type="match status" value="1"/>
</dbReference>
<dbReference type="PANTHER" id="PTHR30560:SF3">
    <property type="entry name" value="TRIGGER FACTOR-LIKE PROTEIN TIG, CHLOROPLASTIC"/>
    <property type="match status" value="1"/>
</dbReference>
<dbReference type="Pfam" id="PF00254">
    <property type="entry name" value="FKBP_C"/>
    <property type="match status" value="1"/>
</dbReference>
<dbReference type="Pfam" id="PF05698">
    <property type="entry name" value="Trigger_C"/>
    <property type="match status" value="1"/>
</dbReference>
<dbReference type="Pfam" id="PF05697">
    <property type="entry name" value="Trigger_N"/>
    <property type="match status" value="1"/>
</dbReference>
<dbReference type="PIRSF" id="PIRSF003095">
    <property type="entry name" value="Trigger_factor"/>
    <property type="match status" value="1"/>
</dbReference>
<dbReference type="SUPFAM" id="SSF54534">
    <property type="entry name" value="FKBP-like"/>
    <property type="match status" value="1"/>
</dbReference>
<dbReference type="SUPFAM" id="SSF109998">
    <property type="entry name" value="Triger factor/SurA peptide-binding domain-like"/>
    <property type="match status" value="1"/>
</dbReference>
<dbReference type="SUPFAM" id="SSF102735">
    <property type="entry name" value="Trigger factor ribosome-binding domain"/>
    <property type="match status" value="1"/>
</dbReference>
<dbReference type="PROSITE" id="PS50059">
    <property type="entry name" value="FKBP_PPIASE"/>
    <property type="match status" value="1"/>
</dbReference>